<name>RS15_MICAN</name>
<comment type="function">
    <text evidence="1">One of the primary rRNA binding proteins, it binds directly to 16S rRNA where it helps nucleate assembly of the platform of the 30S subunit by binding and bridging several RNA helices of the 16S rRNA.</text>
</comment>
<comment type="function">
    <text evidence="1">Forms an intersubunit bridge (bridge B4) with the 23S rRNA of the 50S subunit in the ribosome.</text>
</comment>
<comment type="subunit">
    <text evidence="1">Part of the 30S ribosomal subunit. Forms a bridge to the 50S subunit in the 70S ribosome, contacting the 23S rRNA.</text>
</comment>
<comment type="similarity">
    <text evidence="1">Belongs to the universal ribosomal protein uS15 family.</text>
</comment>
<organism>
    <name type="scientific">Microcystis aeruginosa (strain NIES-843 / IAM M-2473)</name>
    <dbReference type="NCBI Taxonomy" id="449447"/>
    <lineage>
        <taxon>Bacteria</taxon>
        <taxon>Bacillati</taxon>
        <taxon>Cyanobacteriota</taxon>
        <taxon>Cyanophyceae</taxon>
        <taxon>Oscillatoriophycideae</taxon>
        <taxon>Chroococcales</taxon>
        <taxon>Microcystaceae</taxon>
        <taxon>Microcystis</taxon>
    </lineage>
</organism>
<proteinExistence type="inferred from homology"/>
<feature type="chain" id="PRO_1000086807" description="Small ribosomal subunit protein uS15">
    <location>
        <begin position="1"/>
        <end position="89"/>
    </location>
</feature>
<feature type="region of interest" description="Disordered" evidence="2">
    <location>
        <begin position="1"/>
        <end position="24"/>
    </location>
</feature>
<dbReference type="EMBL" id="AP009552">
    <property type="protein sequence ID" value="BAG00450.1"/>
    <property type="molecule type" value="Genomic_DNA"/>
</dbReference>
<dbReference type="RefSeq" id="WP_002738807.1">
    <property type="nucleotide sequence ID" value="NC_010296.1"/>
</dbReference>
<dbReference type="SMR" id="B0JPD9"/>
<dbReference type="STRING" id="449447.MAE_06280"/>
<dbReference type="PaxDb" id="449447-MAE_06280"/>
<dbReference type="EnsemblBacteria" id="BAG00450">
    <property type="protein sequence ID" value="BAG00450"/>
    <property type="gene ID" value="MAE_06280"/>
</dbReference>
<dbReference type="GeneID" id="66706174"/>
<dbReference type="KEGG" id="mar:MAE_06280"/>
<dbReference type="eggNOG" id="COG0184">
    <property type="taxonomic scope" value="Bacteria"/>
</dbReference>
<dbReference type="HOGENOM" id="CLU_148518_0_0_3"/>
<dbReference type="BioCyc" id="MAER449447:MAE_RS02795-MONOMER"/>
<dbReference type="Proteomes" id="UP000001510">
    <property type="component" value="Chromosome"/>
</dbReference>
<dbReference type="GO" id="GO:0022627">
    <property type="term" value="C:cytosolic small ribosomal subunit"/>
    <property type="evidence" value="ECO:0007669"/>
    <property type="project" value="TreeGrafter"/>
</dbReference>
<dbReference type="GO" id="GO:0019843">
    <property type="term" value="F:rRNA binding"/>
    <property type="evidence" value="ECO:0007669"/>
    <property type="project" value="UniProtKB-UniRule"/>
</dbReference>
<dbReference type="GO" id="GO:0003735">
    <property type="term" value="F:structural constituent of ribosome"/>
    <property type="evidence" value="ECO:0007669"/>
    <property type="project" value="InterPro"/>
</dbReference>
<dbReference type="GO" id="GO:0006412">
    <property type="term" value="P:translation"/>
    <property type="evidence" value="ECO:0007669"/>
    <property type="project" value="UniProtKB-UniRule"/>
</dbReference>
<dbReference type="CDD" id="cd00353">
    <property type="entry name" value="Ribosomal_S15p_S13e"/>
    <property type="match status" value="1"/>
</dbReference>
<dbReference type="FunFam" id="1.10.287.10:FF:000002">
    <property type="entry name" value="30S ribosomal protein S15"/>
    <property type="match status" value="1"/>
</dbReference>
<dbReference type="Gene3D" id="6.10.250.3130">
    <property type="match status" value="1"/>
</dbReference>
<dbReference type="Gene3D" id="1.10.287.10">
    <property type="entry name" value="S15/NS1, RNA-binding"/>
    <property type="match status" value="1"/>
</dbReference>
<dbReference type="HAMAP" id="MF_01343_B">
    <property type="entry name" value="Ribosomal_uS15_B"/>
    <property type="match status" value="1"/>
</dbReference>
<dbReference type="InterPro" id="IPR000589">
    <property type="entry name" value="Ribosomal_uS15"/>
</dbReference>
<dbReference type="InterPro" id="IPR005290">
    <property type="entry name" value="Ribosomal_uS15_bac-type"/>
</dbReference>
<dbReference type="InterPro" id="IPR009068">
    <property type="entry name" value="uS15_NS1_RNA-bd_sf"/>
</dbReference>
<dbReference type="NCBIfam" id="TIGR00952">
    <property type="entry name" value="S15_bact"/>
    <property type="match status" value="1"/>
</dbReference>
<dbReference type="PANTHER" id="PTHR23321">
    <property type="entry name" value="RIBOSOMAL PROTEIN S15, BACTERIAL AND ORGANELLAR"/>
    <property type="match status" value="1"/>
</dbReference>
<dbReference type="PANTHER" id="PTHR23321:SF26">
    <property type="entry name" value="SMALL RIBOSOMAL SUBUNIT PROTEIN US15M"/>
    <property type="match status" value="1"/>
</dbReference>
<dbReference type="Pfam" id="PF00312">
    <property type="entry name" value="Ribosomal_S15"/>
    <property type="match status" value="1"/>
</dbReference>
<dbReference type="SMART" id="SM01387">
    <property type="entry name" value="Ribosomal_S15"/>
    <property type="match status" value="1"/>
</dbReference>
<dbReference type="SUPFAM" id="SSF47060">
    <property type="entry name" value="S15/NS1 RNA-binding domain"/>
    <property type="match status" value="1"/>
</dbReference>
<dbReference type="PROSITE" id="PS00362">
    <property type="entry name" value="RIBOSOMAL_S15"/>
    <property type="match status" value="1"/>
</dbReference>
<evidence type="ECO:0000255" key="1">
    <source>
        <dbReference type="HAMAP-Rule" id="MF_01343"/>
    </source>
</evidence>
<evidence type="ECO:0000256" key="2">
    <source>
        <dbReference type="SAM" id="MobiDB-lite"/>
    </source>
</evidence>
<evidence type="ECO:0000305" key="3"/>
<reference key="1">
    <citation type="journal article" date="2007" name="DNA Res.">
        <title>Complete genomic structure of the bloom-forming toxic cyanobacterium Microcystis aeruginosa NIES-843.</title>
        <authorList>
            <person name="Kaneko T."/>
            <person name="Nakajima N."/>
            <person name="Okamoto S."/>
            <person name="Suzuki I."/>
            <person name="Tanabe Y."/>
            <person name="Tamaoki M."/>
            <person name="Nakamura Y."/>
            <person name="Kasai F."/>
            <person name="Watanabe A."/>
            <person name="Kawashima K."/>
            <person name="Kishida Y."/>
            <person name="Ono A."/>
            <person name="Shimizu Y."/>
            <person name="Takahashi C."/>
            <person name="Minami C."/>
            <person name="Fujishiro T."/>
            <person name="Kohara M."/>
            <person name="Katoh M."/>
            <person name="Nakazaki N."/>
            <person name="Nakayama S."/>
            <person name="Yamada M."/>
            <person name="Tabata S."/>
            <person name="Watanabe M.M."/>
        </authorList>
    </citation>
    <scope>NUCLEOTIDE SEQUENCE [LARGE SCALE GENOMIC DNA]</scope>
    <source>
        <strain>NIES-843 / IAM M-247</strain>
    </source>
</reference>
<protein>
    <recommendedName>
        <fullName evidence="1">Small ribosomal subunit protein uS15</fullName>
    </recommendedName>
    <alternativeName>
        <fullName evidence="3">30S ribosomal protein S15</fullName>
    </alternativeName>
</protein>
<keyword id="KW-0687">Ribonucleoprotein</keyword>
<keyword id="KW-0689">Ribosomal protein</keyword>
<keyword id="KW-0694">RNA-binding</keyword>
<keyword id="KW-0699">rRNA-binding</keyword>
<gene>
    <name evidence="1" type="primary">rpsO</name>
    <name evidence="1" type="synonym">rps15</name>
    <name type="ordered locus">MAE_06280</name>
</gene>
<sequence>MALTQTKKQELISQYQAHETDTGSSELQVAFLTERINQLTEHLKANPKDHASRRGLLQMIGRRRGLLTYIQKKDQQRYQTLIGRLGIRR</sequence>
<accession>B0JPD9</accession>